<protein>
    <recommendedName>
        <fullName>Protein STE12</fullName>
    </recommendedName>
</protein>
<feature type="chain" id="PRO_0000072262" description="Protein STE12">
    <location>
        <begin position="1"/>
        <end position="688"/>
    </location>
</feature>
<feature type="DNA-binding region">
    <location>
        <begin position="57"/>
        <end position="167"/>
    </location>
</feature>
<feature type="region of interest" description="Disordered" evidence="1">
    <location>
        <begin position="177"/>
        <end position="199"/>
    </location>
</feature>
<feature type="region of interest" description="Disordered" evidence="1">
    <location>
        <begin position="211"/>
        <end position="239"/>
    </location>
</feature>
<feature type="region of interest" description="Disordered" evidence="1">
    <location>
        <begin position="285"/>
        <end position="305"/>
    </location>
</feature>
<feature type="region of interest" description="Disordered" evidence="1">
    <location>
        <begin position="587"/>
        <end position="610"/>
    </location>
</feature>
<feature type="region of interest" description="Disordered" evidence="1">
    <location>
        <begin position="630"/>
        <end position="688"/>
    </location>
</feature>
<feature type="compositionally biased region" description="Polar residues" evidence="1">
    <location>
        <begin position="217"/>
        <end position="226"/>
    </location>
</feature>
<feature type="compositionally biased region" description="Basic and acidic residues" evidence="1">
    <location>
        <begin position="230"/>
        <end position="239"/>
    </location>
</feature>
<feature type="compositionally biased region" description="Basic and acidic residues" evidence="1">
    <location>
        <begin position="288"/>
        <end position="302"/>
    </location>
</feature>
<feature type="compositionally biased region" description="Polar residues" evidence="1">
    <location>
        <begin position="588"/>
        <end position="604"/>
    </location>
</feature>
<feature type="compositionally biased region" description="Basic and acidic residues" evidence="1">
    <location>
        <begin position="640"/>
        <end position="649"/>
    </location>
</feature>
<feature type="compositionally biased region" description="Basic and acidic residues" evidence="1">
    <location>
        <begin position="672"/>
        <end position="688"/>
    </location>
</feature>
<feature type="modified residue" description="Phosphothreonine" evidence="5 6">
    <location>
        <position position="29"/>
    </location>
</feature>
<feature type="modified residue" description="Phosphoserine" evidence="7">
    <location>
        <position position="214"/>
    </location>
</feature>
<feature type="modified residue" description="Phosphoserine" evidence="5 6 7">
    <location>
        <position position="226"/>
    </location>
</feature>
<feature type="modified residue" description="Phosphothreonine" evidence="6">
    <location>
        <position position="289"/>
    </location>
</feature>
<feature type="modified residue" description="Phosphoserine" evidence="5 7">
    <location>
        <position position="400"/>
    </location>
</feature>
<gene>
    <name type="primary">STE12</name>
    <name type="ordered locus">YHR084W</name>
</gene>
<accession>P13574</accession>
<accession>D3DL35</accession>
<organism>
    <name type="scientific">Saccharomyces cerevisiae (strain ATCC 204508 / S288c)</name>
    <name type="common">Baker's yeast</name>
    <dbReference type="NCBI Taxonomy" id="559292"/>
    <lineage>
        <taxon>Eukaryota</taxon>
        <taxon>Fungi</taxon>
        <taxon>Dikarya</taxon>
        <taxon>Ascomycota</taxon>
        <taxon>Saccharomycotina</taxon>
        <taxon>Saccharomycetes</taxon>
        <taxon>Saccharomycetales</taxon>
        <taxon>Saccharomycetaceae</taxon>
        <taxon>Saccharomyces</taxon>
    </lineage>
</organism>
<comment type="function">
    <text>Binds to the DNA sequence mediating pheromone induction (called the pheromone response element = PRE) which is found in the upstream control region of several a-, alpha- and haploid-specific genes. Involved in mating of haploids and in pseudohyphae formation in diploids.</text>
</comment>
<comment type="subunit">
    <text evidence="3">Interacts with mating-type protein ALPHA1.</text>
</comment>
<comment type="interaction">
    <interactant intactId="EBI-18264">
        <id>P13574</id>
    </interactant>
    <interactant intactId="EBI-29752">
        <id>Q03063</id>
        <label>DIG1</label>
    </interactant>
    <organismsDiffer>false</organismsDiffer>
    <experiments>7</experiments>
</comment>
<comment type="interaction">
    <interactant intactId="EBI-18264">
        <id>P13574</id>
    </interactant>
    <interactant intactId="EBI-34019">
        <id>Q03373</id>
        <label>DIG2</label>
    </interactant>
    <organismsDiffer>false</organismsDiffer>
    <experiments>10</experiments>
</comment>
<comment type="interaction">
    <interactant intactId="EBI-18264">
        <id>P13574</id>
    </interactant>
    <interactant intactId="EBI-9945">
        <id>P14681</id>
        <label>KSS1</label>
    </interactant>
    <organismsDiffer>false</organismsDiffer>
    <experiments>8</experiments>
</comment>
<comment type="interaction">
    <interactant intactId="EBI-18264">
        <id>P13574</id>
    </interactant>
    <interactant intactId="EBI-10438">
        <id>P0CY06</id>
        <label>MATALPHA1</label>
    </interactant>
    <organismsDiffer>false</organismsDiffer>
    <experiments>2</experiments>
</comment>
<comment type="interaction">
    <interactant intactId="EBI-18264">
        <id>P13574</id>
    </interactant>
    <interactant intactId="EBI-17372">
        <id>Q00772</id>
        <label>SLT2</label>
    </interactant>
    <organismsDiffer>false</organismsDiffer>
    <experiments>2</experiments>
</comment>
<comment type="interaction">
    <interactant intactId="EBI-18264">
        <id>P13574</id>
    </interactant>
    <interactant intactId="EBI-19091">
        <id>P18412</id>
        <label>TEC1</label>
    </interactant>
    <organismsDiffer>false</organismsDiffer>
    <experiments>13</experiments>
</comment>
<comment type="subcellular location">
    <subcellularLocation>
        <location>Nucleus</location>
    </subcellularLocation>
</comment>
<comment type="domain">
    <text>The DNA-binding domain seems to be involved in the suppression of pseudohyphae formation under nitrogen-rich conditions and in haploids. This region is also involved in the regulation of budding pattern of haploids.</text>
</comment>
<comment type="PTM">
    <text>Phosphorylated by the STE7, STE11 and STE20 kinases.</text>
</comment>
<comment type="miscellaneous">
    <text evidence="2">Present with 1920 molecules/cell in log phase SD medium.</text>
</comment>
<comment type="similarity">
    <text evidence="4">Belongs to the STE12 transcription factor family.</text>
</comment>
<sequence length="688" mass="77867">MKVQITNSRTEEILKVQANNENDEVSKATPGEVEESLRLIGDLKFFLATAPVNWQENQIIRRYYLNSGQGFVSCVFWNNLYYITGTDIVKCCLYRMQKFGREVVQKKKFEEGIFSDLRNLKCGIDATLEQPKSEFLSFLFRNMCLKTQKKQKVFFWFSVAHDKLFADALERDLKRESLNQPSTTKPVNEPALSFSYDSSSDKPLYDQLLQHLDSRRPSSTTKSDNSPPKLESENFKDNELVTVTNQPLLGVGLMDDDAPESPSQINDFIPQKLIIEPNTLELNGLTEETPHDLPKNTAKGRDEEDFPLDYFPVSVEYPTEENAFDPFPPQAFTPAAPSMPISYDNVNERDSMPVNSLLNRYPYQLSVAPTFPVPPSSSRQHFMTNRDFYSSNNNKEKLVSPSDPTSYMKYDEPVMDFDESRPNENCTNAKSHNSGQQTKQHQLYSNNFQQSYPNGMVPGYYPKMPYNPMGGDPLLDQAFYGADDFFFPPEGCDNNMLYPQTATSWNVLPPQAMQPAPTYVGRPYTPNYRSTPGSAMFPYMQSSNSMQWNTAVSPYSSRAPSTTAKNYPPSTFYSQNINQYPRRRTVGMKSSQGNVPTGNKQSVGKSAKISKPLHIKTSAYQKQYKINLETKARPSAGDEDSAHPDKNKEISMPTPDSNTLVVQSEEGGAHSLEVDTNRRSDKNLPDAT</sequence>
<reference key="1">
    <citation type="journal article" date="1989" name="Proc. Natl. Acad. Sci. U.S.A.">
        <title>The yeast STE12 protein binds to the DNA sequence mediating pheromone induction.</title>
        <authorList>
            <person name="Dolan J.W."/>
            <person name="Kirkman C."/>
            <person name="Fields S."/>
        </authorList>
    </citation>
    <scope>NUCLEOTIDE SEQUENCE [GENOMIC DNA]</scope>
</reference>
<reference key="2">
    <citation type="journal article" date="1989" name="Genes Dev.">
        <title>STE12, a protein involved in cell-type-specific transcription and signal transduction in yeast, is part of protein-DNA complexes.</title>
        <authorList>
            <person name="Errede B."/>
            <person name="Ammerer G."/>
        </authorList>
    </citation>
    <scope>NUCLEOTIDE SEQUENCE [GENOMIC DNA]</scope>
</reference>
<reference key="3">
    <citation type="journal article" date="1994" name="Science">
        <title>Complete nucleotide sequence of Saccharomyces cerevisiae chromosome VIII.</title>
        <authorList>
            <person name="Johnston M."/>
            <person name="Andrews S."/>
            <person name="Brinkman R."/>
            <person name="Cooper J."/>
            <person name="Ding H."/>
            <person name="Dover J."/>
            <person name="Du Z."/>
            <person name="Favello A."/>
            <person name="Fulton L."/>
            <person name="Gattung S."/>
            <person name="Geisel C."/>
            <person name="Kirsten J."/>
            <person name="Kucaba T."/>
            <person name="Hillier L.W."/>
            <person name="Jier M."/>
            <person name="Johnston L."/>
            <person name="Langston Y."/>
            <person name="Latreille P."/>
            <person name="Louis E.J."/>
            <person name="Macri C."/>
            <person name="Mardis E."/>
            <person name="Menezes S."/>
            <person name="Mouser L."/>
            <person name="Nhan M."/>
            <person name="Rifkin L."/>
            <person name="Riles L."/>
            <person name="St Peter H."/>
            <person name="Trevaskis E."/>
            <person name="Vaughan K."/>
            <person name="Vignati D."/>
            <person name="Wilcox L."/>
            <person name="Wohldman P."/>
            <person name="Waterston R."/>
            <person name="Wilson R."/>
            <person name="Vaudin M."/>
        </authorList>
    </citation>
    <scope>NUCLEOTIDE SEQUENCE [LARGE SCALE GENOMIC DNA]</scope>
    <source>
        <strain>ATCC 204508 / S288c</strain>
    </source>
</reference>
<reference key="4">
    <citation type="journal article" date="2014" name="G3 (Bethesda)">
        <title>The reference genome sequence of Saccharomyces cerevisiae: Then and now.</title>
        <authorList>
            <person name="Engel S.R."/>
            <person name="Dietrich F.S."/>
            <person name="Fisk D.G."/>
            <person name="Binkley G."/>
            <person name="Balakrishnan R."/>
            <person name="Costanzo M.C."/>
            <person name="Dwight S.S."/>
            <person name="Hitz B.C."/>
            <person name="Karra K."/>
            <person name="Nash R.S."/>
            <person name="Weng S."/>
            <person name="Wong E.D."/>
            <person name="Lloyd P."/>
            <person name="Skrzypek M.S."/>
            <person name="Miyasato S.R."/>
            <person name="Simison M."/>
            <person name="Cherry J.M."/>
        </authorList>
    </citation>
    <scope>GENOME REANNOTATION</scope>
    <source>
        <strain>ATCC 204508 / S288c</strain>
    </source>
</reference>
<reference key="5">
    <citation type="journal article" date="1991" name="Mol. Cell. Biol.">
        <title>Properties of the DNA-binding domain of the Saccharomyces cerevisiae STE12 protein.</title>
        <authorList>
            <person name="Yuan Y.-L."/>
            <person name="Fields S."/>
        </authorList>
    </citation>
    <scope>DNA-BINDING DOMAIN</scope>
</reference>
<reference key="6">
    <citation type="journal article" date="1993" name="Genes Dev.">
        <title>Coupling of cell identity to signal response in yeast: interaction between the alpha-1 and STE12 proteins.</title>
        <authorList>
            <person name="Yuan Y.-L.O."/>
            <person name="Stroke I."/>
            <person name="Fields S."/>
        </authorList>
    </citation>
    <scope>INTERACTION WITH ALPHA1</scope>
</reference>
<reference key="7">
    <citation type="journal article" date="2003" name="Nature">
        <title>Global analysis of protein expression in yeast.</title>
        <authorList>
            <person name="Ghaemmaghami S."/>
            <person name="Huh W.-K."/>
            <person name="Bower K."/>
            <person name="Howson R.W."/>
            <person name="Belle A."/>
            <person name="Dephoure N."/>
            <person name="O'Shea E.K."/>
            <person name="Weissman J.S."/>
        </authorList>
    </citation>
    <scope>LEVEL OF PROTEIN EXPRESSION [LARGE SCALE ANALYSIS]</scope>
</reference>
<reference key="8">
    <citation type="journal article" date="2007" name="J. Proteome Res.">
        <title>Large-scale phosphorylation analysis of alpha-factor-arrested Saccharomyces cerevisiae.</title>
        <authorList>
            <person name="Li X."/>
            <person name="Gerber S.A."/>
            <person name="Rudner A.D."/>
            <person name="Beausoleil S.A."/>
            <person name="Haas W."/>
            <person name="Villen J."/>
            <person name="Elias J.E."/>
            <person name="Gygi S.P."/>
        </authorList>
    </citation>
    <scope>PHOSPHORYLATION [LARGE SCALE ANALYSIS] AT THR-29; SER-226 AND SER-400</scope>
    <scope>IDENTIFICATION BY MASS SPECTROMETRY [LARGE SCALE ANALYSIS]</scope>
    <source>
        <strain>ADR376</strain>
    </source>
</reference>
<reference key="9">
    <citation type="journal article" date="2008" name="Mol. Cell. Proteomics">
        <title>A multidimensional chromatography technology for in-depth phosphoproteome analysis.</title>
        <authorList>
            <person name="Albuquerque C.P."/>
            <person name="Smolka M.B."/>
            <person name="Payne S.H."/>
            <person name="Bafna V."/>
            <person name="Eng J."/>
            <person name="Zhou H."/>
        </authorList>
    </citation>
    <scope>PHOSPHORYLATION [LARGE SCALE ANALYSIS] AT THR-29; SER-226 AND THR-289</scope>
    <scope>IDENTIFICATION BY MASS SPECTROMETRY [LARGE SCALE ANALYSIS]</scope>
</reference>
<reference key="10">
    <citation type="journal article" date="2009" name="Science">
        <title>Global analysis of Cdk1 substrate phosphorylation sites provides insights into evolution.</title>
        <authorList>
            <person name="Holt L.J."/>
            <person name="Tuch B.B."/>
            <person name="Villen J."/>
            <person name="Johnson A.D."/>
            <person name="Gygi S.P."/>
            <person name="Morgan D.O."/>
        </authorList>
    </citation>
    <scope>PHOSPHORYLATION [LARGE SCALE ANALYSIS] AT SER-214; SER-226 AND SER-400</scope>
    <scope>IDENTIFICATION BY MASS SPECTROMETRY [LARGE SCALE ANALYSIS]</scope>
</reference>
<reference key="11">
    <citation type="journal article" date="2012" name="Proc. Natl. Acad. Sci. U.S.A.">
        <title>N-terminal acetylome analyses and functional insights of the N-terminal acetyltransferase NatB.</title>
        <authorList>
            <person name="Van Damme P."/>
            <person name="Lasa M."/>
            <person name="Polevoda B."/>
            <person name="Gazquez C."/>
            <person name="Elosegui-Artola A."/>
            <person name="Kim D.S."/>
            <person name="De Juan-Pardo E."/>
            <person name="Demeyer K."/>
            <person name="Hole K."/>
            <person name="Larrea E."/>
            <person name="Timmerman E."/>
            <person name="Prieto J."/>
            <person name="Arnesen T."/>
            <person name="Sherman F."/>
            <person name="Gevaert K."/>
            <person name="Aldabe R."/>
        </authorList>
    </citation>
    <scope>IDENTIFICATION BY MASS SPECTROMETRY [LARGE SCALE ANALYSIS]</scope>
</reference>
<keyword id="KW-0002">3D-structure</keyword>
<keyword id="KW-0010">Activator</keyword>
<keyword id="KW-0238">DNA-binding</keyword>
<keyword id="KW-0539">Nucleus</keyword>
<keyword id="KW-0589">Pheromone response</keyword>
<keyword id="KW-0597">Phosphoprotein</keyword>
<keyword id="KW-1185">Reference proteome</keyword>
<keyword id="KW-0804">Transcription</keyword>
<keyword id="KW-0805">Transcription regulation</keyword>
<name>STE12_YEAST</name>
<dbReference type="EMBL" id="X16112">
    <property type="protein sequence ID" value="CAA34246.1"/>
    <property type="molecule type" value="Genomic_DNA"/>
</dbReference>
<dbReference type="EMBL" id="M24502">
    <property type="protein sequence ID" value="AAA35109.1"/>
    <property type="molecule type" value="Genomic_DNA"/>
</dbReference>
<dbReference type="EMBL" id="U10556">
    <property type="protein sequence ID" value="AAB68884.1"/>
    <property type="molecule type" value="Genomic_DNA"/>
</dbReference>
<dbReference type="EMBL" id="BK006934">
    <property type="protein sequence ID" value="DAA06779.1"/>
    <property type="molecule type" value="Genomic_DNA"/>
</dbReference>
<dbReference type="PIR" id="A33540">
    <property type="entry name" value="A33540"/>
</dbReference>
<dbReference type="RefSeq" id="NP_011952.1">
    <property type="nucleotide sequence ID" value="NM_001179214.1"/>
</dbReference>
<dbReference type="PDB" id="3W3W">
    <property type="method" value="X-ray"/>
    <property type="resolution" value="2.20 A"/>
    <property type="chains" value="B=581-649"/>
</dbReference>
<dbReference type="PDBsum" id="3W3W"/>
<dbReference type="SMR" id="P13574"/>
<dbReference type="BioGRID" id="36519">
    <property type="interactions" value="115"/>
</dbReference>
<dbReference type="ComplexPortal" id="CPX-575">
    <property type="entry name" value="Ste12/Dig1/Dig2 transcription regulation complex"/>
</dbReference>
<dbReference type="ComplexPortal" id="CPX-576">
    <property type="entry name" value="Tec1/Ste12/Dig1 transcription regulation complex"/>
</dbReference>
<dbReference type="DIP" id="DIP-64N"/>
<dbReference type="FunCoup" id="P13574">
    <property type="interactions" value="3708"/>
</dbReference>
<dbReference type="IntAct" id="P13574">
    <property type="interactions" value="28"/>
</dbReference>
<dbReference type="MINT" id="P13574"/>
<dbReference type="STRING" id="4932.YHR084W"/>
<dbReference type="GlyGen" id="P13574">
    <property type="glycosylation" value="2 sites"/>
</dbReference>
<dbReference type="iPTMnet" id="P13574"/>
<dbReference type="PaxDb" id="4932-YHR084W"/>
<dbReference type="PeptideAtlas" id="P13574"/>
<dbReference type="EnsemblFungi" id="YHR084W_mRNA">
    <property type="protein sequence ID" value="YHR084W"/>
    <property type="gene ID" value="YHR084W"/>
</dbReference>
<dbReference type="GeneID" id="856484"/>
<dbReference type="KEGG" id="sce:YHR084W"/>
<dbReference type="AGR" id="SGD:S000001126"/>
<dbReference type="SGD" id="S000001126">
    <property type="gene designation" value="STE12"/>
</dbReference>
<dbReference type="VEuPathDB" id="FungiDB:YHR084W"/>
<dbReference type="eggNOG" id="ENOG502QTVR">
    <property type="taxonomic scope" value="Eukaryota"/>
</dbReference>
<dbReference type="HOGENOM" id="CLU_019798_0_0_1"/>
<dbReference type="InParanoid" id="P13574"/>
<dbReference type="OMA" id="IMREDAG"/>
<dbReference type="OrthoDB" id="1095242at2759"/>
<dbReference type="BioCyc" id="YEAST:G3O-31131-MONOMER"/>
<dbReference type="BioGRID-ORCS" id="856484">
    <property type="hits" value="3 hits in 13 CRISPR screens"/>
</dbReference>
<dbReference type="EvolutionaryTrace" id="P13574"/>
<dbReference type="PRO" id="PR:P13574"/>
<dbReference type="Proteomes" id="UP000002311">
    <property type="component" value="Chromosome VIII"/>
</dbReference>
<dbReference type="RNAct" id="P13574">
    <property type="molecule type" value="protein"/>
</dbReference>
<dbReference type="GO" id="GO:0005654">
    <property type="term" value="C:nucleoplasm"/>
    <property type="evidence" value="ECO:0000314"/>
    <property type="project" value="SGD"/>
</dbReference>
<dbReference type="GO" id="GO:0005634">
    <property type="term" value="C:nucleus"/>
    <property type="evidence" value="ECO:0000314"/>
    <property type="project" value="SGD"/>
</dbReference>
<dbReference type="GO" id="GO:1990526">
    <property type="term" value="C:Ste12p-Dig1p-Dig2p complex"/>
    <property type="evidence" value="ECO:0000314"/>
    <property type="project" value="SGD"/>
</dbReference>
<dbReference type="GO" id="GO:1990527">
    <property type="term" value="C:Tec1p-Ste12p-Dig1p complex"/>
    <property type="evidence" value="ECO:0000314"/>
    <property type="project" value="SGD"/>
</dbReference>
<dbReference type="GO" id="GO:0003677">
    <property type="term" value="F:DNA binding"/>
    <property type="evidence" value="ECO:0007669"/>
    <property type="project" value="UniProtKB-KW"/>
</dbReference>
<dbReference type="GO" id="GO:0003700">
    <property type="term" value="F:DNA-binding transcription factor activity"/>
    <property type="evidence" value="ECO:0000314"/>
    <property type="project" value="SGD"/>
</dbReference>
<dbReference type="GO" id="GO:0071444">
    <property type="term" value="P:cellular response to pheromone"/>
    <property type="evidence" value="ECO:0000315"/>
    <property type="project" value="SGD"/>
</dbReference>
<dbReference type="GO" id="GO:0000747">
    <property type="term" value="P:conjugation with cellular fusion"/>
    <property type="evidence" value="ECO:0000314"/>
    <property type="project" value="SGD"/>
</dbReference>
<dbReference type="GO" id="GO:0001403">
    <property type="term" value="P:invasive growth in response to glucose limitation"/>
    <property type="evidence" value="ECO:0000315"/>
    <property type="project" value="SGD"/>
</dbReference>
<dbReference type="GO" id="GO:0045894">
    <property type="term" value="P:negative regulation of mating-type specific transcription, DNA-templated"/>
    <property type="evidence" value="ECO:0000303"/>
    <property type="project" value="ComplexPortal"/>
</dbReference>
<dbReference type="GO" id="GO:0000122">
    <property type="term" value="P:negative regulation of transcription by RNA polymerase II"/>
    <property type="evidence" value="ECO:0000315"/>
    <property type="project" value="SGD"/>
</dbReference>
<dbReference type="GO" id="GO:0045944">
    <property type="term" value="P:positive regulation of transcription by RNA polymerase II"/>
    <property type="evidence" value="ECO:0000315"/>
    <property type="project" value="SGD"/>
</dbReference>
<dbReference type="GO" id="GO:0007124">
    <property type="term" value="P:pseudohyphal growth"/>
    <property type="evidence" value="ECO:0000315"/>
    <property type="project" value="SGD"/>
</dbReference>
<dbReference type="GO" id="GO:0010570">
    <property type="term" value="P:regulation of filamentous growth"/>
    <property type="evidence" value="ECO:0000303"/>
    <property type="project" value="ComplexPortal"/>
</dbReference>
<dbReference type="GO" id="GO:2000220">
    <property type="term" value="P:regulation of pseudohyphal growth"/>
    <property type="evidence" value="ECO:0000318"/>
    <property type="project" value="GO_Central"/>
</dbReference>
<dbReference type="GO" id="GO:0019953">
    <property type="term" value="P:sexual reproduction"/>
    <property type="evidence" value="ECO:0000318"/>
    <property type="project" value="GO_Central"/>
</dbReference>
<dbReference type="InterPro" id="IPR003120">
    <property type="entry name" value="Ste12"/>
</dbReference>
<dbReference type="InterPro" id="IPR052127">
    <property type="entry name" value="STE12_transcription_factor"/>
</dbReference>
<dbReference type="PANTHER" id="PTHR47427">
    <property type="entry name" value="PROTEIN STE12"/>
    <property type="match status" value="1"/>
</dbReference>
<dbReference type="PANTHER" id="PTHR47427:SF1">
    <property type="entry name" value="PROTEIN STE12"/>
    <property type="match status" value="1"/>
</dbReference>
<dbReference type="Pfam" id="PF02200">
    <property type="entry name" value="STE"/>
    <property type="match status" value="1"/>
</dbReference>
<dbReference type="SMART" id="SM00424">
    <property type="entry name" value="STE"/>
    <property type="match status" value="1"/>
</dbReference>
<proteinExistence type="evidence at protein level"/>
<evidence type="ECO:0000256" key="1">
    <source>
        <dbReference type="SAM" id="MobiDB-lite"/>
    </source>
</evidence>
<evidence type="ECO:0000269" key="2">
    <source>
    </source>
</evidence>
<evidence type="ECO:0000269" key="3">
    <source>
    </source>
</evidence>
<evidence type="ECO:0000305" key="4"/>
<evidence type="ECO:0007744" key="5">
    <source>
    </source>
</evidence>
<evidence type="ECO:0007744" key="6">
    <source>
    </source>
</evidence>
<evidence type="ECO:0007744" key="7">
    <source>
    </source>
</evidence>